<protein>
    <recommendedName>
        <fullName evidence="1">Chaperone protein DnaK</fullName>
    </recommendedName>
    <alternativeName>
        <fullName evidence="1">HSP70</fullName>
    </alternativeName>
    <alternativeName>
        <fullName evidence="1">Heat shock 70 kDa protein</fullName>
    </alternativeName>
    <alternativeName>
        <fullName evidence="1">Heat shock protein 70</fullName>
    </alternativeName>
</protein>
<name>DNAK_METSB</name>
<organism>
    <name type="scientific">Methylocella silvestris (strain DSM 15510 / CIP 108128 / LMG 27833 / NCIMB 13906 / BL2)</name>
    <dbReference type="NCBI Taxonomy" id="395965"/>
    <lineage>
        <taxon>Bacteria</taxon>
        <taxon>Pseudomonadati</taxon>
        <taxon>Pseudomonadota</taxon>
        <taxon>Alphaproteobacteria</taxon>
        <taxon>Hyphomicrobiales</taxon>
        <taxon>Beijerinckiaceae</taxon>
        <taxon>Methylocella</taxon>
    </lineage>
</organism>
<keyword id="KW-0067">ATP-binding</keyword>
<keyword id="KW-0143">Chaperone</keyword>
<keyword id="KW-0547">Nucleotide-binding</keyword>
<keyword id="KW-0597">Phosphoprotein</keyword>
<keyword id="KW-1185">Reference proteome</keyword>
<keyword id="KW-0346">Stress response</keyword>
<comment type="function">
    <text evidence="1">Acts as a chaperone.</text>
</comment>
<comment type="induction">
    <text evidence="1">By stress conditions e.g. heat shock.</text>
</comment>
<comment type="similarity">
    <text evidence="1">Belongs to the heat shock protein 70 family.</text>
</comment>
<sequence>MAKVIGIDLGTTNSCVAVMEGTTPKVIENAEGARTTPSIVAFTDDGERLVGQPAKRQSVTNPERTFFAIKRLIGRTYDDPMTKKDMGLVPYKIIRASNGDAWVEADGKQYSPSQISAFILQKMKETAEAYLGQPVSQAVITVPAYFNDAQRQATKDAGKIAGLEVLRIINEPTAAALAYGLDKKGAGVIAVYDLGGGTFDVSILEIGDGVFEVKSTNGDTFLGGEDFDVRLVEYLADEFKKENGIDLKKDKLALQRLKEAAEKAKIELSSATQTEINLPYITADATGPKHLTLKLTRAKFEALVDDLIQKTVEPCRKALKDAGLTAGEINEVVLVGGMTRMPKVQEVVKSFFGKEPHKGVNPDEVVAIGAAVQAGVLQGDVKDVLLLDVTPLSLGIETLGGVFTRLIDRNTTIPTKKSQVFSTAEDNQTAVTIRVFQGEREMAADNKLLGQFDLVGIPGAPRGVPQIEVTFDIDANGIVNVTAKDKATNKEQQIRIQASGGLSEGDIDKMVKDAEVHAAEDKKRRELVDARNQAEAMVHSAEKSLTEFAGKVSDADKSALEAAIASVKGVLEGEDVEAIKARSNDLAQASMKLGEAMYKAGAEAGPQEGGGAEKDDVIDADFKEVGPDDKKKSA</sequence>
<dbReference type="EMBL" id="CP001280">
    <property type="protein sequence ID" value="ACK51866.1"/>
    <property type="molecule type" value="Genomic_DNA"/>
</dbReference>
<dbReference type="RefSeq" id="WP_012591935.1">
    <property type="nucleotide sequence ID" value="NC_011666.1"/>
</dbReference>
<dbReference type="SMR" id="B8EIP9"/>
<dbReference type="STRING" id="395965.Msil_2955"/>
<dbReference type="KEGG" id="msl:Msil_2955"/>
<dbReference type="eggNOG" id="COG0443">
    <property type="taxonomic scope" value="Bacteria"/>
</dbReference>
<dbReference type="HOGENOM" id="CLU_005965_2_1_5"/>
<dbReference type="OrthoDB" id="9766019at2"/>
<dbReference type="Proteomes" id="UP000002257">
    <property type="component" value="Chromosome"/>
</dbReference>
<dbReference type="GO" id="GO:0005524">
    <property type="term" value="F:ATP binding"/>
    <property type="evidence" value="ECO:0007669"/>
    <property type="project" value="UniProtKB-UniRule"/>
</dbReference>
<dbReference type="GO" id="GO:0140662">
    <property type="term" value="F:ATP-dependent protein folding chaperone"/>
    <property type="evidence" value="ECO:0007669"/>
    <property type="project" value="InterPro"/>
</dbReference>
<dbReference type="GO" id="GO:0051082">
    <property type="term" value="F:unfolded protein binding"/>
    <property type="evidence" value="ECO:0007669"/>
    <property type="project" value="InterPro"/>
</dbReference>
<dbReference type="CDD" id="cd11733">
    <property type="entry name" value="ASKHA_NBD_HSP70_HSPA9"/>
    <property type="match status" value="1"/>
</dbReference>
<dbReference type="FunFam" id="2.60.34.10:FF:000014">
    <property type="entry name" value="Chaperone protein DnaK HSP70"/>
    <property type="match status" value="1"/>
</dbReference>
<dbReference type="FunFam" id="3.30.420.40:FF:000020">
    <property type="entry name" value="Chaperone protein HscA homolog"/>
    <property type="match status" value="1"/>
</dbReference>
<dbReference type="FunFam" id="3.30.30.30:FF:000003">
    <property type="entry name" value="Heat shock protein 9"/>
    <property type="match status" value="1"/>
</dbReference>
<dbReference type="FunFam" id="1.20.1270.10:FF:000001">
    <property type="entry name" value="Molecular chaperone DnaK"/>
    <property type="match status" value="1"/>
</dbReference>
<dbReference type="FunFam" id="3.30.420.40:FF:000004">
    <property type="entry name" value="Molecular chaperone DnaK"/>
    <property type="match status" value="1"/>
</dbReference>
<dbReference type="FunFam" id="3.90.640.10:FF:000003">
    <property type="entry name" value="Molecular chaperone DnaK"/>
    <property type="match status" value="1"/>
</dbReference>
<dbReference type="Gene3D" id="1.20.1270.10">
    <property type="match status" value="1"/>
</dbReference>
<dbReference type="Gene3D" id="3.30.420.40">
    <property type="match status" value="2"/>
</dbReference>
<dbReference type="Gene3D" id="3.90.640.10">
    <property type="entry name" value="Actin, Chain A, domain 4"/>
    <property type="match status" value="1"/>
</dbReference>
<dbReference type="Gene3D" id="2.60.34.10">
    <property type="entry name" value="Substrate Binding Domain Of DNAk, Chain A, domain 1"/>
    <property type="match status" value="1"/>
</dbReference>
<dbReference type="HAMAP" id="MF_00332">
    <property type="entry name" value="DnaK"/>
    <property type="match status" value="1"/>
</dbReference>
<dbReference type="InterPro" id="IPR043129">
    <property type="entry name" value="ATPase_NBD"/>
</dbReference>
<dbReference type="InterPro" id="IPR012725">
    <property type="entry name" value="Chaperone_DnaK"/>
</dbReference>
<dbReference type="InterPro" id="IPR018181">
    <property type="entry name" value="Heat_shock_70_CS"/>
</dbReference>
<dbReference type="InterPro" id="IPR029048">
    <property type="entry name" value="HSP70_C_sf"/>
</dbReference>
<dbReference type="InterPro" id="IPR029047">
    <property type="entry name" value="HSP70_peptide-bd_sf"/>
</dbReference>
<dbReference type="InterPro" id="IPR013126">
    <property type="entry name" value="Hsp_70_fam"/>
</dbReference>
<dbReference type="NCBIfam" id="NF001413">
    <property type="entry name" value="PRK00290.1"/>
    <property type="match status" value="1"/>
</dbReference>
<dbReference type="NCBIfam" id="NF003520">
    <property type="entry name" value="PRK05183.1"/>
    <property type="match status" value="1"/>
</dbReference>
<dbReference type="NCBIfam" id="TIGR02350">
    <property type="entry name" value="prok_dnaK"/>
    <property type="match status" value="1"/>
</dbReference>
<dbReference type="PANTHER" id="PTHR19375">
    <property type="entry name" value="HEAT SHOCK PROTEIN 70KDA"/>
    <property type="match status" value="1"/>
</dbReference>
<dbReference type="Pfam" id="PF00012">
    <property type="entry name" value="HSP70"/>
    <property type="match status" value="1"/>
</dbReference>
<dbReference type="PRINTS" id="PR00301">
    <property type="entry name" value="HEATSHOCK70"/>
</dbReference>
<dbReference type="SUPFAM" id="SSF53067">
    <property type="entry name" value="Actin-like ATPase domain"/>
    <property type="match status" value="2"/>
</dbReference>
<dbReference type="SUPFAM" id="SSF100934">
    <property type="entry name" value="Heat shock protein 70kD (HSP70), C-terminal subdomain"/>
    <property type="match status" value="1"/>
</dbReference>
<dbReference type="SUPFAM" id="SSF100920">
    <property type="entry name" value="Heat shock protein 70kD (HSP70), peptide-binding domain"/>
    <property type="match status" value="1"/>
</dbReference>
<dbReference type="PROSITE" id="PS00297">
    <property type="entry name" value="HSP70_1"/>
    <property type="match status" value="1"/>
</dbReference>
<dbReference type="PROSITE" id="PS00329">
    <property type="entry name" value="HSP70_2"/>
    <property type="match status" value="1"/>
</dbReference>
<dbReference type="PROSITE" id="PS01036">
    <property type="entry name" value="HSP70_3"/>
    <property type="match status" value="1"/>
</dbReference>
<accession>B8EIP9</accession>
<proteinExistence type="inferred from homology"/>
<evidence type="ECO:0000255" key="1">
    <source>
        <dbReference type="HAMAP-Rule" id="MF_00332"/>
    </source>
</evidence>
<evidence type="ECO:0000256" key="2">
    <source>
        <dbReference type="SAM" id="MobiDB-lite"/>
    </source>
</evidence>
<gene>
    <name evidence="1" type="primary">dnaK</name>
    <name type="ordered locus">Msil_2955</name>
</gene>
<reference key="1">
    <citation type="journal article" date="2010" name="J. Bacteriol.">
        <title>Complete genome sequence of the aerobic facultative methanotroph Methylocella silvestris BL2.</title>
        <authorList>
            <person name="Chen Y."/>
            <person name="Crombie A."/>
            <person name="Rahman M.T."/>
            <person name="Dedysh S.N."/>
            <person name="Liesack W."/>
            <person name="Stott M.B."/>
            <person name="Alam M."/>
            <person name="Theisen A.R."/>
            <person name="Murrell J.C."/>
            <person name="Dunfield P.F."/>
        </authorList>
    </citation>
    <scope>NUCLEOTIDE SEQUENCE [LARGE SCALE GENOMIC DNA]</scope>
    <source>
        <strain>DSM 15510 / CIP 108128 / LMG 27833 / NCIMB 13906 / BL2</strain>
    </source>
</reference>
<feature type="chain" id="PRO_1000133154" description="Chaperone protein DnaK">
    <location>
        <begin position="1"/>
        <end position="634"/>
    </location>
</feature>
<feature type="region of interest" description="Disordered" evidence="2">
    <location>
        <begin position="600"/>
        <end position="634"/>
    </location>
</feature>
<feature type="compositionally biased region" description="Basic and acidic residues" evidence="2">
    <location>
        <begin position="611"/>
        <end position="634"/>
    </location>
</feature>
<feature type="modified residue" description="Phosphothreonine; by autocatalysis" evidence="1">
    <location>
        <position position="198"/>
    </location>
</feature>